<comment type="function">
    <text evidence="1 2 3 4">CRISPR (clustered regularly interspaced short palindromic repeat), is an adaptive immune system that provides protection against mobile genetic elements (viruses, transposable elements and conjugative plasmids). CRISPR clusters contain sequences complementary to antecedent mobile elements and target invading nucleic acids. CRISPR clusters are transcribed and processed into CRISPR RNA (crRNA). In type II CRISPR systems correct processing of pre-crRNA requires a trans-encoded small RNA (tracrRNA), endogenous ribonuclease 3 (rnc) and this protein (By similarity). The tracrRNA serves as a guide for ribonuclease 3-aided processing of pre-crRNA (By similarity). Protein-crRNA-tracrRNA endonucleolytically cleave dsDNA target complementary to the spacer; protein is inactive in the absence of crRNA homologous to the target and tracrRNA (PubMed:26593719). Recognizes a short motif in the CRISPR repeat sequences (the 5' PAM or protospacer adjacent motif, TTN in this organism) to help distinguish self versus nonself, as targets within the bacterial CRISPR locus do not have PAMs (PubMed:26593719). PAM recognition is also required for catalytic activity. Cleavage results in staggered 6-8 base 5'-overhangs 14-17 and 23-24 bases downstream of the PAM (protospacer adjacent motif) on the non-target and target strands respectively (PubMed:27984729, PubMed:27989439). Both target and non-target strand DNA are probably independently cleaved in the same active site (PubMed:27984729).</text>
</comment>
<comment type="cofactor">
    <cofactor evidence="2 4">
        <name>a divalent metal cation</name>
        <dbReference type="ChEBI" id="CHEBI:60240"/>
    </cofactor>
    <text evidence="2 4">Optimal in vitro activity occurs in the presence of Mg(2+), but there is weak activity in its absence (PubMed:26593719). A more complete study shows a preference for Mn(2+), although activity is seen with Mg(2+) and Ca(2+) also (PubMed:27989439).</text>
</comment>
<comment type="biophysicochemical properties">
    <temperatureDependence>
        <text evidence="2 3">Optimum temperature is 50 degrees Celsius cuts between 37 and 60 degrees Celsius.</text>
    </temperatureDependence>
</comment>
<comment type="subunit">
    <text evidence="4">Monomer.</text>
</comment>
<comment type="domain">
    <text evidence="8 9">Structures show 2 discontinuous REC (recognition, residues 15-386, 658-784) and NUC (nuclease, residues 1-14, 387-658 and 785-1129) lobes composed of several domains each; the boundaries given correspond to Lui et al., but Yang et al., differ only by a few residues in most cases (PubMed:27984729, PubMed:27989439). The crRNA (or single guide, sgRNA) binds in a central channel between the 2 lobes (PubMed:27984729, PubMed:27989439). PAM recognition is sequence specific and occurs mostly via interaction with the REC1 (helical-1) and WED-II (OBD-II) domains (PubMed:27984729). The sgRNA-target DNA heteroduplex binds primarily to the REC lobe in a sequence-independent manner (PubMed:27984729).</text>
</comment>
<comment type="biotechnology">
    <text evidence="2 3 4">The simplicity of the Cas12b-crRNA-tracrRNA endonuclease activity can be used in vitro to target and cleave a DNA sequence of interest, even in the presence of human cell lysate (PubMed:26593719). Fusion of the 5'-tracrRNA:crRNA-3' into a single-guide RNA (sgRNA) leads to a protein-sgRNA system that endonucleolytically cleaves target DNA in vitro (PubMed:26593719, PubMed:27984729, PubMed:27989439).</text>
</comment>
<comment type="miscellaneous">
    <text evidence="7">Part of a type V-B CRISPR-Cas system.</text>
</comment>
<comment type="similarity">
    <text evidence="10">Belongs to the CRISPR-associated endonuclease Cas12b family.</text>
</comment>
<dbReference type="EC" id="3.1.-.-" evidence="2"/>
<dbReference type="EMBL" id="AURB01000127">
    <property type="protein sequence ID" value="EPZ47377.1"/>
    <property type="molecule type" value="Genomic_DNA"/>
</dbReference>
<dbReference type="EMBL" id="CP080467">
    <property type="protein sequence ID" value="UNO49077.1"/>
    <property type="molecule type" value="Genomic_DNA"/>
</dbReference>
<dbReference type="RefSeq" id="WP_021296342.1">
    <property type="nucleotide sequence ID" value="NZ_AURB01000127.1"/>
</dbReference>
<dbReference type="PDB" id="5U30">
    <property type="method" value="X-ray"/>
    <property type="resolution" value="2.92 A"/>
    <property type="chains" value="A=1-1129"/>
</dbReference>
<dbReference type="PDB" id="5U31">
    <property type="method" value="X-ray"/>
    <property type="resolution" value="2.89 A"/>
    <property type="chains" value="A=1-1129"/>
</dbReference>
<dbReference type="PDB" id="5U33">
    <property type="method" value="X-ray"/>
    <property type="resolution" value="3.75 A"/>
    <property type="chains" value="A=1-1129"/>
</dbReference>
<dbReference type="PDB" id="5U34">
    <property type="method" value="X-ray"/>
    <property type="resolution" value="3.25 A"/>
    <property type="chains" value="A=1-1129"/>
</dbReference>
<dbReference type="PDB" id="5WQE">
    <property type="method" value="X-ray"/>
    <property type="resolution" value="3.13 A"/>
    <property type="chains" value="A=1-1129"/>
</dbReference>
<dbReference type="PDBsum" id="5U30"/>
<dbReference type="PDBsum" id="5U31"/>
<dbReference type="PDBsum" id="5U33"/>
<dbReference type="PDBsum" id="5U34"/>
<dbReference type="PDBsum" id="5WQE"/>
<dbReference type="SMR" id="T0D7A2"/>
<dbReference type="STRING" id="1356854.N007_06525"/>
<dbReference type="KEGG" id="aaco:K1I37_00465"/>
<dbReference type="PATRIC" id="fig|1356854.4.peg.1703"/>
<dbReference type="eggNOG" id="COG0675">
    <property type="taxonomic scope" value="Bacteria"/>
</dbReference>
<dbReference type="OrthoDB" id="2369085at2"/>
<dbReference type="Proteomes" id="UP000829401">
    <property type="component" value="Chromosome"/>
</dbReference>
<dbReference type="GO" id="GO:0003677">
    <property type="term" value="F:DNA binding"/>
    <property type="evidence" value="ECO:0007669"/>
    <property type="project" value="UniProtKB-KW"/>
</dbReference>
<dbReference type="GO" id="GO:0004519">
    <property type="term" value="F:endonuclease activity"/>
    <property type="evidence" value="ECO:0007669"/>
    <property type="project" value="UniProtKB-KW"/>
</dbReference>
<dbReference type="GO" id="GO:0003723">
    <property type="term" value="F:RNA binding"/>
    <property type="evidence" value="ECO:0007669"/>
    <property type="project" value="UniProtKB-KW"/>
</dbReference>
<dbReference type="GO" id="GO:0051607">
    <property type="term" value="P:defense response to virus"/>
    <property type="evidence" value="ECO:0007669"/>
    <property type="project" value="UniProtKB-KW"/>
</dbReference>
<dbReference type="InterPro" id="IPR054013">
    <property type="entry name" value="C2c1_helical_1st"/>
</dbReference>
<dbReference type="InterPro" id="IPR054012">
    <property type="entry name" value="C2c1_helical_2nd"/>
</dbReference>
<dbReference type="InterPro" id="IPR054010">
    <property type="entry name" value="C2c1_Nuc-II"/>
</dbReference>
<dbReference type="InterPro" id="IPR054011">
    <property type="entry name" value="C2c1_RuvC-like"/>
</dbReference>
<dbReference type="InterPro" id="IPR054009">
    <property type="entry name" value="C2c1_WED-II"/>
</dbReference>
<dbReference type="InterPro" id="IPR053603">
    <property type="entry name" value="Cas12b_endonuclease"/>
</dbReference>
<dbReference type="NCBIfam" id="NF033949">
    <property type="entry name" value="Cas12b"/>
    <property type="match status" value="1"/>
</dbReference>
<dbReference type="Pfam" id="PF22172">
    <property type="entry name" value="C2c1_helical"/>
    <property type="match status" value="1"/>
</dbReference>
<dbReference type="Pfam" id="PF22202">
    <property type="entry name" value="C2c1_helical_1st"/>
    <property type="match status" value="2"/>
</dbReference>
<dbReference type="Pfam" id="PF22077">
    <property type="entry name" value="C2c1_Nuc-II"/>
    <property type="match status" value="1"/>
</dbReference>
<dbReference type="Pfam" id="PF22126">
    <property type="entry name" value="C2c1_RuvC-like"/>
    <property type="match status" value="1"/>
</dbReference>
<dbReference type="Pfam" id="PF22204">
    <property type="entry name" value="C2c1_WED-II"/>
    <property type="match status" value="1"/>
</dbReference>
<reference evidence="11" key="1">
    <citation type="journal article" date="2013" name="Genome Announc.">
        <title>Draft genome sequence of Alicyclobacillus acidoterrestris strain ATCC 49025.</title>
        <authorList>
            <person name="Shemesh M."/>
            <person name="Pasvolsky R."/>
            <person name="Sela N."/>
            <person name="Green S.J."/>
            <person name="Zakin V."/>
        </authorList>
    </citation>
    <scope>NUCLEOTIDE SEQUENCE [LARGE SCALE GENOMIC DNA]</scope>
    <source>
        <strain>ATCC 49025 / DSM 3922 / CIP 106132 / NCIMB 13137 / GD3B</strain>
    </source>
</reference>
<reference evidence="12" key="2">
    <citation type="journal article" date="2022" name="G3 (Bethesda)">
        <title>Unveiling the complete genome sequence of Alicyclobacillus acidoterrestris DSM 3922T, a taint-producing strain.</title>
        <authorList>
            <person name="Leonardo I.C."/>
            <person name="Barreto Crespo M.T."/>
            <person name="Gaspar F.B."/>
        </authorList>
    </citation>
    <scope>NUCLEOTIDE SEQUENCE [LARGE SCALE GENOMIC DNA]</scope>
    <source>
        <strain>ATCC 49025 / DSM 3922 / CIP 106132 / NCIMB 13137 / GD3B</strain>
    </source>
</reference>
<reference key="3">
    <citation type="journal article" date="2015" name="Mol. Cell">
        <title>Discovery and functional characterization of diverse class 2 CRISPR-Cas systems.</title>
        <authorList>
            <person name="Shmakov S."/>
            <person name="Abudayyeh O.O."/>
            <person name="Makarova K.S."/>
            <person name="Wolf Y.I."/>
            <person name="Gootenberg J.S."/>
            <person name="Semenova E."/>
            <person name="Minakhin L."/>
            <person name="Joung J."/>
            <person name="Konermann S."/>
            <person name="Severinov K."/>
            <person name="Zhang F."/>
            <person name="Koonin E.V."/>
        </authorList>
    </citation>
    <scope>IDENTIFICATION</scope>
    <scope>FUNCTION AS AN ENDONUCLEASE</scope>
    <scope>COFACTOR</scope>
    <scope>BIOPHYSICOCHEMICAL PROPERTIES</scope>
    <scope>BIOTECHNOLOGY</scope>
    <source>
        <strain>ATCC 49025 / DSM 3922 / CIP 106132 / NCIMB 13137 / GD3B</strain>
    </source>
</reference>
<reference key="4">
    <citation type="journal article" date="2017" name="Nat. Rev. Microbiol.">
        <title>Diversity and evolution of class 2 CRISPR-Cas systems.</title>
        <authorList>
            <person name="Shmakov S."/>
            <person name="Smargon A."/>
            <person name="Scott D."/>
            <person name="Cox D."/>
            <person name="Pyzocha N."/>
            <person name="Yan W."/>
            <person name="Abudayyeh O.O."/>
            <person name="Gootenberg J.S."/>
            <person name="Makarova K.S."/>
            <person name="Wolf Y.I."/>
            <person name="Severinov K."/>
            <person name="Zhang F."/>
            <person name="Koonin E.V."/>
        </authorList>
    </citation>
    <scope>NOMENCLATURE</scope>
</reference>
<reference key="5">
    <citation type="journal article" date="2023" name="Nat. Commun.">
        <title>Assessing and advancing the safety of CRISPR-Cas tools: from DNA to RNA editing.</title>
        <authorList>
            <person name="Tao J."/>
            <person name="Bauer D.E."/>
            <person name="Chiarle R."/>
        </authorList>
    </citation>
    <scope>REVIEW ON SAFETY OF GENOME EDITING TOOLS</scope>
</reference>
<reference evidence="13 14 15 16" key="6">
    <citation type="journal article" date="2016" name="Cell">
        <title>PAM-dependent target DNA recognition and cleavage by C2c1 CRISPR-Cas endonuclease.</title>
        <authorList>
            <person name="Yang H."/>
            <person name="Gao P."/>
            <person name="Rajashankar K.R."/>
            <person name="Patel D.J."/>
        </authorList>
    </citation>
    <scope>X-RAY CRYSTALLOGRAPHY (2.89 ANGSTROMS) IN COMPLEX WITH SGRNA WITH AND WITHOUT TARGET DNA</scope>
    <scope>FUNCTION AS AN ENDONUCLEASE</scope>
    <scope>ACTIVE SITE</scope>
    <scope>BIOPHYSICOCHEMICAL PROPERTIES</scope>
    <scope>DOMAIN</scope>
    <scope>BIOTECHNOLOGY</scope>
    <scope>MUTAGENESIS OF 118-GLN-GLN-119; ARG-122; GLY-143; GLY-478; ARG-507; ASP-570; ARG-574; GLU-848; TYR-853; SER-899; ARG-900; ARG-911 AND ASP-977</scope>
    <scope>DNA-BINDING</scope>
    <scope>RNA-BINDING</scope>
</reference>
<reference evidence="17" key="7">
    <citation type="journal article" date="2017" name="Mol. Cell">
        <title>C2c1-sgRNA complex structure reveals RNA-guided DNA cleavage mechanism.</title>
        <authorList>
            <person name="Liu L."/>
            <person name="Chen P."/>
            <person name="Wang M."/>
            <person name="Li X."/>
            <person name="Wang J."/>
            <person name="Yin M."/>
            <person name="Wang Y."/>
        </authorList>
    </citation>
    <scope>X-RAY CRYSTALLOGRAPHY (3.13 ANGSTROMS) IN COMPLEX WITH SGRNA</scope>
    <scope>FUNCTION AS AN ENDONUCLEASE</scope>
    <scope>ACTIVE SITE</scope>
    <scope>COFACTOR</scope>
    <scope>SUBUNIT</scope>
    <scope>DOMAIN</scope>
    <scope>BIOTECHNOLOGY</scope>
    <scope>MUTAGENESIS OF TRP-391; GLN-482; ARG-485; ASP-570; ARG-911; ASP-977; ARG-1000 AND ARG-1015</scope>
    <scope>RNA-BINDING</scope>
</reference>
<feature type="chain" id="PRO_0000437504" description="CRISPR-associated endonuclease Cas12b">
    <location>
        <begin position="1"/>
        <end position="1129"/>
    </location>
</feature>
<feature type="region of interest" description="WED-I (OBD-I) domain" evidence="8 9">
    <location>
        <begin position="1"/>
        <end position="14"/>
    </location>
</feature>
<feature type="region of interest" description="Binds sgRNA" evidence="3 4">
    <location>
        <begin position="4"/>
        <end position="9"/>
    </location>
</feature>
<feature type="region of interest" description="REC1 (Helical-1)domain" evidence="8 9">
    <location>
        <begin position="15"/>
        <end position="386"/>
    </location>
</feature>
<feature type="region of interest" description="Binds DNA protospacer adjacent motif (PAM) on target DNA" evidence="3">
    <location>
        <begin position="118"/>
        <end position="122"/>
    </location>
</feature>
<feature type="region of interest" description="Binds DNA protospacer adjacent motif (PAM) on target DNA" evidence="3">
    <location>
        <begin position="143"/>
        <end position="144"/>
    </location>
</feature>
<feature type="region of interest" description="WED-II (OBD-II) domain" evidence="8 9">
    <location>
        <begin position="387"/>
        <end position="518"/>
    </location>
</feature>
<feature type="region of interest" description="Binds sgRNA" evidence="3 4">
    <location>
        <begin position="442"/>
        <end position="446"/>
    </location>
</feature>
<feature type="region of interest" description="RuvC-I domain" evidence="8 9">
    <location>
        <begin position="519"/>
        <end position="628"/>
    </location>
</feature>
<feature type="region of interest" description="Binds non-target ssDNA" evidence="3">
    <location>
        <begin position="573"/>
        <end position="574"/>
    </location>
</feature>
<feature type="region of interest" description="Bridge helix domain" evidence="8 9">
    <location>
        <begin position="629"/>
        <end position="658"/>
    </location>
</feature>
<feature type="region of interest" description="REC2 (Helical-II) domain" evidence="8 9">
    <location>
        <begin position="659"/>
        <end position="784"/>
    </location>
</feature>
<feature type="region of interest" description="Binds sgRNA" evidence="3 4">
    <location>
        <begin position="742"/>
        <end position="746"/>
    </location>
</feature>
<feature type="region of interest" description="Binds sgRNA" evidence="3 4">
    <location>
        <begin position="753"/>
        <end position="754"/>
    </location>
</feature>
<feature type="region of interest" description="RuvC-II domain" evidence="8 9">
    <location>
        <begin position="785"/>
        <end position="900"/>
    </location>
</feature>
<feature type="region of interest" description="Binds sgRNA" evidence="3 4">
    <location>
        <begin position="792"/>
        <end position="796"/>
    </location>
</feature>
<feature type="region of interest" description="Binds sgRNA" evidence="3 4">
    <location>
        <begin position="800"/>
        <end position="819"/>
    </location>
</feature>
<feature type="region of interest" description="Binds sgRNA" evidence="3 4">
    <location>
        <begin position="835"/>
        <end position="839"/>
    </location>
</feature>
<feature type="region of interest" description="Binds non-target ssDNA" evidence="3">
    <location>
        <begin position="897"/>
        <end position="900"/>
    </location>
</feature>
<feature type="region of interest" description="Nuc-I domain" evidence="8 9">
    <location>
        <begin position="901"/>
        <end position="974"/>
    </location>
</feature>
<feature type="region of interest" description="Binds sgRNA" evidence="3 4">
    <location>
        <begin position="973"/>
        <end position="978"/>
    </location>
</feature>
<feature type="region of interest" description="RuvC-III domain" evidence="8 9">
    <location>
        <begin position="975"/>
        <end position="993"/>
    </location>
</feature>
<feature type="region of interest" description="Nuc-II domain" evidence="8 9">
    <location>
        <begin position="994"/>
        <end position="1129"/>
    </location>
</feature>
<feature type="active site" description="For DNase activity of RuvC domain" evidence="8 9">
    <location>
        <position position="570"/>
    </location>
</feature>
<feature type="active site" description="For DNase activity of RuvC domain" evidence="8 9">
    <location>
        <position position="848"/>
    </location>
</feature>
<feature type="active site" description="For DNase activity of RuvC domain" evidence="8 9">
    <location>
        <position position="977"/>
    </location>
</feature>
<feature type="binding site" evidence="3 4">
    <location>
        <position position="899"/>
    </location>
    <ligand>
        <name>phosphate</name>
        <dbReference type="ChEBI" id="CHEBI:43474"/>
    </ligand>
</feature>
<feature type="binding site" evidence="3 4">
    <location>
        <position position="911"/>
    </location>
    <ligand>
        <name>phosphate</name>
        <dbReference type="ChEBI" id="CHEBI:43474"/>
    </ligand>
</feature>
<feature type="site" description="Binds DNA protospacer adjacent motif (PAM) on target DNA" evidence="3">
    <location>
        <position position="400"/>
    </location>
</feature>
<feature type="site" description="Binds sgRNA" evidence="3 4">
    <location>
        <position position="415"/>
    </location>
</feature>
<feature type="site" description="Binds 'phosphate lock' on target strand DNA; via amide nitrogen" evidence="3">
    <location>
        <position position="478"/>
    </location>
</feature>
<feature type="site" description="Binds sgRNA" evidence="3 4">
    <location>
        <position position="484"/>
    </location>
</feature>
<feature type="site" description="Binds sgRNA" evidence="3 4">
    <location>
        <position position="501"/>
    </location>
</feature>
<feature type="site" description="Binds 'phosphate lock' on target strand DNA" evidence="3">
    <location>
        <position position="507"/>
    </location>
</feature>
<feature type="site" description="Binds sgRNA" evidence="3 4">
    <location>
        <position position="600"/>
    </location>
</feature>
<feature type="site" description="Binds sgRNA" evidence="3 4">
    <location>
        <position position="614"/>
    </location>
</feature>
<feature type="site" description="Binds sgRNA" evidence="3 4">
    <location>
        <position position="734"/>
    </location>
</feature>
<feature type="site" description="Binds sgRNA" evidence="3 4">
    <location>
        <position position="767"/>
    </location>
</feature>
<feature type="site" description="Binds sgRNA" evidence="3 4">
    <location>
        <position position="825"/>
    </location>
</feature>
<feature type="site" description="Disrupts base stacking adjacent to scissile phosphate" evidence="8">
    <location>
        <position position="853"/>
    </location>
</feature>
<feature type="site" description="Binds sgRNA" evidence="3 4">
    <location>
        <position position="882"/>
    </location>
</feature>
<feature type="site" description="Binds sgRNA" evidence="3 4">
    <location>
        <position position="982"/>
    </location>
</feature>
<feature type="mutagenesis site" description="Greatly reduces cleavage of target DNA." evidence="3">
    <original>QQ</original>
    <variation>AA</variation>
    <location>
        <begin position="118"/>
        <end position="119"/>
    </location>
</feature>
<feature type="mutagenesis site" description="Nearly complete loss of cleavage of target DNA." evidence="3">
    <original>R</original>
    <variation>A</variation>
    <location>
        <position position="122"/>
    </location>
</feature>
<feature type="mutagenesis site" description="Nearly complete loss of cleavage of target DNA." evidence="3">
    <original>G</original>
    <variation>P</variation>
    <location>
        <position position="143"/>
    </location>
</feature>
<feature type="mutagenesis site" description="Significantly reduces cleavage of target DNA." evidence="4">
    <original>W</original>
    <variation>A</variation>
    <location>
        <position position="391"/>
    </location>
</feature>
<feature type="mutagenesis site" description="No cleavage of target DNA." evidence="3">
    <original>G</original>
    <variation>P</variation>
    <location>
        <position position="478"/>
    </location>
</feature>
<feature type="mutagenesis site" description="Reduces cleavage of target DNA." evidence="4">
    <original>Q</original>
    <variation>A</variation>
    <location>
        <position position="482"/>
    </location>
</feature>
<feature type="mutagenesis site" description="Reduces cleavage of target DNA." evidence="4">
    <original>R</original>
    <variation>A</variation>
    <location>
        <position position="485"/>
    </location>
</feature>
<feature type="mutagenesis site" description="Greatly reduces cleavage of target DNA." evidence="3">
    <original>R</original>
    <variation>A</variation>
    <location>
        <position position="507"/>
    </location>
</feature>
<feature type="mutagenesis site" description="Nearly complete loss of cleavage of target DNA. No DNA cleavage; when associated with A-848 and A-977." evidence="3 4">
    <original>D</original>
    <variation>A</variation>
    <location>
        <position position="570"/>
    </location>
</feature>
<feature type="mutagenesis site" description="Reduces cleavage of target DNA." evidence="3">
    <original>R</original>
    <variation>A</variation>
    <location>
        <position position="574"/>
    </location>
</feature>
<feature type="mutagenesis site" description="Nearly complete loss of cleavage of target DNA. No DNA cleavage; when associated with A-570 and A-977." evidence="3 4">
    <original>E</original>
    <variation>A</variation>
    <location>
        <position position="848"/>
    </location>
</feature>
<feature type="mutagenesis site" description="Nearly complete loss of cleavage of target DNA." evidence="3">
    <original>Y</original>
    <variation>A</variation>
    <location>
        <position position="853"/>
    </location>
</feature>
<feature type="mutagenesis site" description="Nearly complete loss of cleavage of target DNA." evidence="3">
    <original>S</original>
    <variation>A</variation>
    <location>
        <position position="899"/>
    </location>
</feature>
<feature type="mutagenesis site" description="Reduces cleavage of target DNA." evidence="3">
    <original>R</original>
    <variation>A</variation>
    <location>
        <position position="900"/>
    </location>
</feature>
<feature type="mutagenesis site" description="Dramatically reduced to no cleavage of target DNA." evidence="3 4">
    <original>R</original>
    <variation>A</variation>
    <location>
        <position position="911"/>
    </location>
</feature>
<feature type="mutagenesis site" description="Nearly complete loss of cleavage of target DNA. No DNA cleavage; when associated with A-570 and A-848." evidence="3 4">
    <original>D</original>
    <variation>A</variation>
    <location>
        <position position="977"/>
    </location>
</feature>
<feature type="mutagenesis site" description="Dramatically reduces cleavage of target DNA." evidence="4">
    <original>R</original>
    <variation>A</variation>
    <location>
        <position position="1000"/>
    </location>
</feature>
<feature type="mutagenesis site" description="Dramatically reduces cleavage of target DNA." evidence="4">
    <original>R</original>
    <variation>A</variation>
    <location>
        <position position="1015"/>
    </location>
</feature>
<feature type="strand" evidence="19">
    <location>
        <begin position="2"/>
        <end position="10"/>
    </location>
</feature>
<feature type="helix" evidence="19">
    <location>
        <begin position="16"/>
        <end position="44"/>
    </location>
</feature>
<feature type="strand" evidence="19">
    <location>
        <begin position="48"/>
        <end position="51"/>
    </location>
</feature>
<feature type="strand" evidence="19">
    <location>
        <begin position="53"/>
        <end position="63"/>
    </location>
</feature>
<feature type="helix" evidence="19">
    <location>
        <begin position="65"/>
        <end position="82"/>
    </location>
</feature>
<feature type="helix" evidence="19">
    <location>
        <begin position="92"/>
        <end position="106"/>
    </location>
</feature>
<feature type="helix" evidence="19">
    <location>
        <begin position="108"/>
        <end position="110"/>
    </location>
</feature>
<feature type="helix" evidence="19">
    <location>
        <begin position="117"/>
        <end position="129"/>
    </location>
</feature>
<feature type="turn" evidence="19">
    <location>
        <begin position="135"/>
        <end position="138"/>
    </location>
</feature>
<feature type="helix" evidence="19">
    <location>
        <begin position="147"/>
        <end position="153"/>
    </location>
</feature>
<feature type="helix" evidence="19">
    <location>
        <begin position="160"/>
        <end position="171"/>
    </location>
</feature>
<feature type="helix" evidence="19">
    <location>
        <begin position="175"/>
        <end position="184"/>
    </location>
</feature>
<feature type="strand" evidence="21">
    <location>
        <begin position="194"/>
        <end position="199"/>
    </location>
</feature>
<feature type="helix" evidence="19">
    <location>
        <begin position="215"/>
        <end position="256"/>
    </location>
</feature>
<feature type="strand" evidence="19">
    <location>
        <begin position="257"/>
        <end position="259"/>
    </location>
</feature>
<feature type="helix" evidence="19">
    <location>
        <begin position="261"/>
        <end position="276"/>
    </location>
</feature>
<feature type="turn" evidence="19">
    <location>
        <begin position="286"/>
        <end position="289"/>
    </location>
</feature>
<feature type="turn" evidence="19">
    <location>
        <begin position="293"/>
        <end position="298"/>
    </location>
</feature>
<feature type="helix" evidence="19">
    <location>
        <begin position="299"/>
        <end position="307"/>
    </location>
</feature>
<feature type="strand" evidence="21">
    <location>
        <begin position="311"/>
        <end position="313"/>
    </location>
</feature>
<feature type="helix" evidence="19">
    <location>
        <begin position="315"/>
        <end position="328"/>
    </location>
</feature>
<feature type="strand" evidence="18">
    <location>
        <begin position="330"/>
        <end position="332"/>
    </location>
</feature>
<feature type="helix" evidence="19">
    <location>
        <begin position="336"/>
        <end position="342"/>
    </location>
</feature>
<feature type="helix" evidence="19">
    <location>
        <begin position="345"/>
        <end position="348"/>
    </location>
</feature>
<feature type="helix" evidence="19">
    <location>
        <begin position="349"/>
        <end position="352"/>
    </location>
</feature>
<feature type="helix" evidence="19">
    <location>
        <begin position="357"/>
        <end position="373"/>
    </location>
</feature>
<feature type="strand" evidence="19">
    <location>
        <begin position="385"/>
        <end position="388"/>
    </location>
</feature>
<feature type="strand" evidence="19">
    <location>
        <begin position="393"/>
        <end position="395"/>
    </location>
</feature>
<feature type="strand" evidence="19">
    <location>
        <begin position="400"/>
        <end position="407"/>
    </location>
</feature>
<feature type="strand" evidence="19">
    <location>
        <begin position="410"/>
        <end position="414"/>
    </location>
</feature>
<feature type="strand" evidence="19">
    <location>
        <begin position="417"/>
        <end position="427"/>
    </location>
</feature>
<feature type="strand" evidence="19">
    <location>
        <begin position="430"/>
        <end position="441"/>
    </location>
</feature>
<feature type="helix" evidence="19">
    <location>
        <begin position="445"/>
        <end position="449"/>
    </location>
</feature>
<feature type="strand" evidence="19">
    <location>
        <begin position="450"/>
        <end position="452"/>
    </location>
</feature>
<feature type="strand" evidence="19">
    <location>
        <begin position="455"/>
        <end position="457"/>
    </location>
</feature>
<feature type="strand" evidence="19">
    <location>
        <begin position="460"/>
        <end position="463"/>
    </location>
</feature>
<feature type="strand" evidence="21">
    <location>
        <begin position="466"/>
        <end position="468"/>
    </location>
</feature>
<feature type="strand" evidence="19">
    <location>
        <begin position="472"/>
        <end position="482"/>
    </location>
</feature>
<feature type="turn" evidence="19">
    <location>
        <begin position="486"/>
        <end position="488"/>
    </location>
</feature>
<feature type="strand" evidence="19">
    <location>
        <begin position="501"/>
        <end position="509"/>
    </location>
</feature>
<feature type="helix" evidence="19">
    <location>
        <begin position="511"/>
        <end position="514"/>
    </location>
</feature>
<feature type="helix" evidence="19">
    <location>
        <begin position="521"/>
        <end position="524"/>
    </location>
</feature>
<feature type="strand" evidence="19">
    <location>
        <begin position="526"/>
        <end position="529"/>
    </location>
</feature>
<feature type="turn" evidence="19">
    <location>
        <begin position="530"/>
        <end position="533"/>
    </location>
</feature>
<feature type="strand" evidence="19">
    <location>
        <begin position="534"/>
        <end position="537"/>
    </location>
</feature>
<feature type="turn" evidence="19">
    <location>
        <begin position="539"/>
        <end position="541"/>
    </location>
</feature>
<feature type="helix" evidence="19">
    <location>
        <begin position="542"/>
        <end position="548"/>
    </location>
</feature>
<feature type="helix" evidence="19">
    <location>
        <begin position="556"/>
        <end position="559"/>
    </location>
</feature>
<feature type="strand" evidence="19">
    <location>
        <begin position="565"/>
        <end position="571"/>
    </location>
</feature>
<feature type="strand" evidence="19">
    <location>
        <begin position="573"/>
        <end position="587"/>
    </location>
</feature>
<feature type="turn" evidence="19">
    <location>
        <begin position="593"/>
        <end position="595"/>
    </location>
</feature>
<feature type="strand" evidence="19">
    <location>
        <begin position="601"/>
        <end position="603"/>
    </location>
</feature>
<feature type="strand" evidence="19">
    <location>
        <begin position="608"/>
        <end position="620"/>
    </location>
</feature>
<feature type="helix" evidence="21">
    <location>
        <begin position="623"/>
        <end position="625"/>
    </location>
</feature>
<feature type="helix" evidence="19">
    <location>
        <begin position="629"/>
        <end position="637"/>
    </location>
</feature>
<feature type="helix" evidence="19">
    <location>
        <begin position="640"/>
        <end position="657"/>
    </location>
</feature>
<feature type="strand" evidence="20">
    <location>
        <begin position="660"/>
        <end position="662"/>
    </location>
</feature>
<feature type="turn" evidence="19">
    <location>
        <begin position="663"/>
        <end position="665"/>
    </location>
</feature>
<feature type="helix" evidence="19">
    <location>
        <begin position="666"/>
        <end position="674"/>
    </location>
</feature>
<feature type="turn" evidence="21">
    <location>
        <begin position="681"/>
        <end position="683"/>
    </location>
</feature>
<feature type="helix" evidence="19">
    <location>
        <begin position="686"/>
        <end position="700"/>
    </location>
</feature>
<feature type="turn" evidence="19">
    <location>
        <begin position="701"/>
        <end position="705"/>
    </location>
</feature>
<feature type="helix" evidence="19">
    <location>
        <begin position="708"/>
        <end position="738"/>
    </location>
</feature>
<feature type="helix" evidence="19">
    <location>
        <begin position="758"/>
        <end position="775"/>
    </location>
</feature>
<feature type="strand" evidence="21">
    <location>
        <begin position="781"/>
        <end position="783"/>
    </location>
</feature>
<feature type="helix" evidence="19">
    <location>
        <begin position="795"/>
        <end position="821"/>
    </location>
</feature>
<feature type="strand" evidence="19">
    <location>
        <begin position="823"/>
        <end position="826"/>
    </location>
</feature>
<feature type="strand" evidence="19">
    <location>
        <begin position="829"/>
        <end position="831"/>
    </location>
</feature>
<feature type="strand" evidence="19">
    <location>
        <begin position="834"/>
        <end position="837"/>
    </location>
</feature>
<feature type="strand" evidence="19">
    <location>
        <begin position="843"/>
        <end position="849"/>
    </location>
</feature>
<feature type="helix" evidence="19">
    <location>
        <begin position="861"/>
        <end position="870"/>
    </location>
</feature>
<feature type="helix" evidence="19">
    <location>
        <begin position="872"/>
        <end position="883"/>
    </location>
</feature>
<feature type="turn" evidence="19">
    <location>
        <begin position="884"/>
        <end position="887"/>
    </location>
</feature>
<feature type="strand" evidence="19">
    <location>
        <begin position="889"/>
        <end position="894"/>
    </location>
</feature>
<feature type="turn" evidence="19">
    <location>
        <begin position="896"/>
        <end position="900"/>
    </location>
</feature>
<feature type="turn" evidence="19">
    <location>
        <begin position="903"/>
        <end position="905"/>
    </location>
</feature>
<feature type="strand" evidence="19">
    <location>
        <begin position="910"/>
        <end position="914"/>
    </location>
</feature>
<feature type="helix" evidence="19">
    <location>
        <begin position="917"/>
        <end position="919"/>
    </location>
</feature>
<feature type="strand" evidence="19">
    <location>
        <begin position="922"/>
        <end position="924"/>
    </location>
</feature>
<feature type="helix" evidence="19">
    <location>
        <begin position="930"/>
        <end position="939"/>
    </location>
</feature>
<feature type="strand" evidence="20">
    <location>
        <begin position="942"/>
        <end position="944"/>
    </location>
</feature>
<feature type="strand" evidence="19">
    <location>
        <begin position="951"/>
        <end position="953"/>
    </location>
</feature>
<feature type="strand" evidence="19">
    <location>
        <begin position="958"/>
        <end position="963"/>
    </location>
</feature>
<feature type="strand" evidence="19">
    <location>
        <begin position="965"/>
        <end position="967"/>
    </location>
</feature>
<feature type="strand" evidence="19">
    <location>
        <begin position="971"/>
        <end position="975"/>
    </location>
</feature>
<feature type="helix" evidence="19">
    <location>
        <begin position="976"/>
        <end position="989"/>
    </location>
</feature>
<feature type="helix" evidence="19">
    <location>
        <begin position="994"/>
        <end position="996"/>
    </location>
</feature>
<feature type="strand" evidence="19">
    <location>
        <begin position="998"/>
        <end position="1014"/>
    </location>
</feature>
<feature type="helix" evidence="19">
    <location>
        <begin position="1018"/>
        <end position="1025"/>
    </location>
</feature>
<feature type="strand" evidence="18">
    <location>
        <begin position="1029"/>
        <end position="1031"/>
    </location>
</feature>
<feature type="strand" evidence="19">
    <location>
        <begin position="1033"/>
        <end position="1040"/>
    </location>
</feature>
<feature type="helix" evidence="21">
    <location>
        <begin position="1058"/>
        <end position="1070"/>
    </location>
</feature>
<feature type="strand" evidence="20">
    <location>
        <begin position="1072"/>
        <end position="1074"/>
    </location>
</feature>
<feature type="strand" evidence="19">
    <location>
        <begin position="1075"/>
        <end position="1078"/>
    </location>
</feature>
<feature type="strand" evidence="21">
    <location>
        <begin position="1081"/>
        <end position="1083"/>
    </location>
</feature>
<feature type="helix" evidence="19">
    <location>
        <begin position="1086"/>
        <end position="1088"/>
    </location>
</feature>
<feature type="strand" evidence="19">
    <location>
        <begin position="1090"/>
        <end position="1092"/>
    </location>
</feature>
<feature type="helix" evidence="19">
    <location>
        <begin position="1093"/>
        <end position="1112"/>
    </location>
</feature>
<sequence>MAVKSIKVKLRLDDMPEIRAGLWKLHKEVNAGVRYYTEWLSLLRQENLYRRSPNGDGEQECDKTAEECKAELLERLRARQVENGHRGPAGSDDELLQLARQLYELLVPQAIGAKGDAQQIARKFLSPLADKDAVGGLGIAKAGNKPRWVRMREAGEPGWEEEKEKAETRKSADRTADVLRALADFGLKPLMRVYTDSEMSSVEWKPLRKGQAVRTWDRDMFQQAIERMMSWESWNQRVGQEYAKLVEQKNRFEQKNFVGQEHLVHLVNQLQQDMKEASPGLESKEQTAHYVTGRALRGSDKVFEKWGKLAPDAPFDLYDAEIKNVQRRNTRRFGSHDLFAKLAEPEYQALWREDASFLTRYAVYNSILRKLNHAKMFATFTLPDATAHPIWTRFDKLGGNLHQYTFLFNEFGERRHAIRFHKLLKVENGVAREVDDVTVPISMSEQLDNLLPRDPNEPIALYFRDYGAEQHFTGEFGGAKIQCRRDQLAHMHRRRGARDVYLNVSVRVQSQSEARGERRPPYAAVFRLVGDNHRAFVHFDKLSDYLAEHPDDGKLGSEGLLSGLRVMSVDLGLRTSASISVFRVARKDELKPNSKGRVPFFFPIKGNDNLVAVHERSQLLKLPGETESKDLRAIREERQRTLRQLRTQLAYLRLLVRCGSEDVGRRERSWAKLIEQPVDAANHMTPDWREAFENELQKLKSLHGICSDKEWMDAVYESVRRVWRHMGKQVRDWRKDVRSGERPKIRGYAKDVVGGNSIEQIEYLERQYKFLKSWSFFGKVSGQVIRAEKGSRFAITLREHIDHAKEDRLKKLADRIIMEALGYVYALDERGKGKWVAKYPPCQLILLEELSEYQFNNDRPPSENNQLMQWSHRGVFQELINQAQVHDLLVGTMYAAFSSRFDARTGAPGIRCRRVPARCTQEHNPEPFPWWLNKFVVEHTLDACPLRADDLIPTGEGEIFVSPFSAEEGDFHQIHADLNAAQNLQQRLWSDFDISQIRLRCDWGEVDGELVLIPRLTGKRTADSYSNKVFYTNTGVTYYERERGKKRRKVFAQEKLSEEEAELLVEADEAREKSVVLMRDPSGIINRGNWTRQKEFWSMVNQRIEGYLVKQIRSRVPLQDSACENTGDI</sequence>
<gene>
    <name evidence="6" type="primary">cas12b</name>
    <name evidence="5" type="synonym">c2c1</name>
    <name evidence="12" type="ORF">K1I37_00465</name>
    <name evidence="11" type="ORF">N007_06525</name>
</gene>
<organism>
    <name type="scientific">Alicyclobacillus acidoterrestris (strain ATCC 49025 / DSM 3922 / CIP 106132 / NCIMB 13137 / GD3B)</name>
    <dbReference type="NCBI Taxonomy" id="1356854"/>
    <lineage>
        <taxon>Bacteria</taxon>
        <taxon>Bacillati</taxon>
        <taxon>Bacillota</taxon>
        <taxon>Bacilli</taxon>
        <taxon>Bacillales</taxon>
        <taxon>Alicyclobacillaceae</taxon>
        <taxon>Alicyclobacillus</taxon>
    </lineage>
</organism>
<protein>
    <recommendedName>
        <fullName evidence="6">CRISPR-associated endonuclease Cas12b</fullName>
        <ecNumber evidence="2">3.1.-.-</ecNumber>
    </recommendedName>
    <alternativeName>
        <fullName evidence="5">AacC2c1</fullName>
    </alternativeName>
    <alternativeName>
        <fullName evidence="5">CRISPR-associated endonuclease C2c1</fullName>
    </alternativeName>
</protein>
<proteinExistence type="evidence at protein level"/>
<evidence type="ECO:0000250" key="1">
    <source>
        <dbReference type="UniProtKB" id="A0Q5Y3"/>
    </source>
</evidence>
<evidence type="ECO:0000269" key="2">
    <source>
    </source>
</evidence>
<evidence type="ECO:0000269" key="3">
    <source>
    </source>
</evidence>
<evidence type="ECO:0000269" key="4">
    <source>
    </source>
</evidence>
<evidence type="ECO:0000303" key="5">
    <source>
    </source>
</evidence>
<evidence type="ECO:0000303" key="6">
    <source>
    </source>
</evidence>
<evidence type="ECO:0000305" key="7">
    <source>
    </source>
</evidence>
<evidence type="ECO:0000305" key="8">
    <source>
    </source>
</evidence>
<evidence type="ECO:0000305" key="9">
    <source>
    </source>
</evidence>
<evidence type="ECO:0000305" key="10">
    <source>
    </source>
</evidence>
<evidence type="ECO:0000312" key="11">
    <source>
        <dbReference type="EMBL" id="EPZ47377.1"/>
    </source>
</evidence>
<evidence type="ECO:0000312" key="12">
    <source>
        <dbReference type="EMBL" id="UNO49077.1"/>
    </source>
</evidence>
<evidence type="ECO:0007744" key="13">
    <source>
        <dbReference type="PDB" id="5U30"/>
    </source>
</evidence>
<evidence type="ECO:0007744" key="14">
    <source>
        <dbReference type="PDB" id="5U31"/>
    </source>
</evidence>
<evidence type="ECO:0007744" key="15">
    <source>
        <dbReference type="PDB" id="5U33"/>
    </source>
</evidence>
<evidence type="ECO:0007744" key="16">
    <source>
        <dbReference type="PDB" id="5U34"/>
    </source>
</evidence>
<evidence type="ECO:0007744" key="17">
    <source>
        <dbReference type="PDB" id="5WQE"/>
    </source>
</evidence>
<evidence type="ECO:0007829" key="18">
    <source>
        <dbReference type="PDB" id="5U30"/>
    </source>
</evidence>
<evidence type="ECO:0007829" key="19">
    <source>
        <dbReference type="PDB" id="5U31"/>
    </source>
</evidence>
<evidence type="ECO:0007829" key="20">
    <source>
        <dbReference type="PDB" id="5U34"/>
    </source>
</evidence>
<evidence type="ECO:0007829" key="21">
    <source>
        <dbReference type="PDB" id="5WQE"/>
    </source>
</evidence>
<name>CS12B_ALIAG</name>
<accession>T0D7A2</accession>
<accession>A0A9E6ZFD4</accession>
<keyword id="KW-0002">3D-structure</keyword>
<keyword id="KW-0051">Antiviral defense</keyword>
<keyword id="KW-0238">DNA-binding</keyword>
<keyword id="KW-0255">Endonuclease</keyword>
<keyword id="KW-0378">Hydrolase</keyword>
<keyword id="KW-0460">Magnesium</keyword>
<keyword id="KW-0540">Nuclease</keyword>
<keyword id="KW-1185">Reference proteome</keyword>
<keyword id="KW-0694">RNA-binding</keyword>